<dbReference type="EMBL" id="CP000485">
    <property type="protein sequence ID" value="ABK87365.1"/>
    <property type="molecule type" value="Genomic_DNA"/>
</dbReference>
<dbReference type="RefSeq" id="WP_001138362.1">
    <property type="nucleotide sequence ID" value="NC_008600.1"/>
</dbReference>
<dbReference type="SMR" id="A0RJH2"/>
<dbReference type="GeneID" id="93006537"/>
<dbReference type="KEGG" id="btl:BALH_4157"/>
<dbReference type="HOGENOM" id="CLU_123265_0_1_9"/>
<dbReference type="GO" id="GO:1990904">
    <property type="term" value="C:ribonucleoprotein complex"/>
    <property type="evidence" value="ECO:0007669"/>
    <property type="project" value="UniProtKB-KW"/>
</dbReference>
<dbReference type="GO" id="GO:0005840">
    <property type="term" value="C:ribosome"/>
    <property type="evidence" value="ECO:0007669"/>
    <property type="project" value="UniProtKB-KW"/>
</dbReference>
<dbReference type="GO" id="GO:0019843">
    <property type="term" value="F:rRNA binding"/>
    <property type="evidence" value="ECO:0007669"/>
    <property type="project" value="UniProtKB-UniRule"/>
</dbReference>
<dbReference type="GO" id="GO:0003735">
    <property type="term" value="F:structural constituent of ribosome"/>
    <property type="evidence" value="ECO:0007669"/>
    <property type="project" value="InterPro"/>
</dbReference>
<dbReference type="GO" id="GO:0000027">
    <property type="term" value="P:ribosomal large subunit assembly"/>
    <property type="evidence" value="ECO:0007669"/>
    <property type="project" value="UniProtKB-UniRule"/>
</dbReference>
<dbReference type="GO" id="GO:0006412">
    <property type="term" value="P:translation"/>
    <property type="evidence" value="ECO:0007669"/>
    <property type="project" value="InterPro"/>
</dbReference>
<dbReference type="CDD" id="cd07026">
    <property type="entry name" value="Ribosomal_L20"/>
    <property type="match status" value="1"/>
</dbReference>
<dbReference type="FunFam" id="1.10.1900.20:FF:000001">
    <property type="entry name" value="50S ribosomal protein L20"/>
    <property type="match status" value="1"/>
</dbReference>
<dbReference type="Gene3D" id="6.10.160.10">
    <property type="match status" value="1"/>
</dbReference>
<dbReference type="Gene3D" id="1.10.1900.20">
    <property type="entry name" value="Ribosomal protein L20"/>
    <property type="match status" value="1"/>
</dbReference>
<dbReference type="HAMAP" id="MF_00382">
    <property type="entry name" value="Ribosomal_bL20"/>
    <property type="match status" value="1"/>
</dbReference>
<dbReference type="InterPro" id="IPR005813">
    <property type="entry name" value="Ribosomal_bL20"/>
</dbReference>
<dbReference type="InterPro" id="IPR049946">
    <property type="entry name" value="RIBOSOMAL_L20_CS"/>
</dbReference>
<dbReference type="InterPro" id="IPR035566">
    <property type="entry name" value="Ribosomal_protein_bL20_C"/>
</dbReference>
<dbReference type="NCBIfam" id="TIGR01032">
    <property type="entry name" value="rplT_bact"/>
    <property type="match status" value="1"/>
</dbReference>
<dbReference type="PANTHER" id="PTHR10986">
    <property type="entry name" value="39S RIBOSOMAL PROTEIN L20"/>
    <property type="match status" value="1"/>
</dbReference>
<dbReference type="Pfam" id="PF00453">
    <property type="entry name" value="Ribosomal_L20"/>
    <property type="match status" value="1"/>
</dbReference>
<dbReference type="PRINTS" id="PR00062">
    <property type="entry name" value="RIBOSOMALL20"/>
</dbReference>
<dbReference type="SUPFAM" id="SSF74731">
    <property type="entry name" value="Ribosomal protein L20"/>
    <property type="match status" value="1"/>
</dbReference>
<dbReference type="PROSITE" id="PS00937">
    <property type="entry name" value="RIBOSOMAL_L20"/>
    <property type="match status" value="1"/>
</dbReference>
<gene>
    <name evidence="1" type="primary">rplT</name>
    <name type="ordered locus">BALH_4157</name>
</gene>
<accession>A0RJH2</accession>
<keyword id="KW-0687">Ribonucleoprotein</keyword>
<keyword id="KW-0689">Ribosomal protein</keyword>
<keyword id="KW-0694">RNA-binding</keyword>
<keyword id="KW-0699">rRNA-binding</keyword>
<sequence>MPRVKGGTVTRQRRKKVIKLAKGYYGSKNTLFKVANQQVMKSLMYAFRDRRQKKRDFRKLWITRINAAARMNGLSYSRLMHGLKNAGIEVNRKMLADLAVHDEKAFAELATVAKNNIN</sequence>
<evidence type="ECO:0000255" key="1">
    <source>
        <dbReference type="HAMAP-Rule" id="MF_00382"/>
    </source>
</evidence>
<evidence type="ECO:0000305" key="2"/>
<name>RL20_BACAH</name>
<proteinExistence type="inferred from homology"/>
<organism>
    <name type="scientific">Bacillus thuringiensis (strain Al Hakam)</name>
    <dbReference type="NCBI Taxonomy" id="412694"/>
    <lineage>
        <taxon>Bacteria</taxon>
        <taxon>Bacillati</taxon>
        <taxon>Bacillota</taxon>
        <taxon>Bacilli</taxon>
        <taxon>Bacillales</taxon>
        <taxon>Bacillaceae</taxon>
        <taxon>Bacillus</taxon>
        <taxon>Bacillus cereus group</taxon>
    </lineage>
</organism>
<reference key="1">
    <citation type="journal article" date="2007" name="J. Bacteriol.">
        <title>The complete genome sequence of Bacillus thuringiensis Al Hakam.</title>
        <authorList>
            <person name="Challacombe J.F."/>
            <person name="Altherr M.R."/>
            <person name="Xie G."/>
            <person name="Bhotika S.S."/>
            <person name="Brown N."/>
            <person name="Bruce D."/>
            <person name="Campbell C.S."/>
            <person name="Campbell M.L."/>
            <person name="Chen J."/>
            <person name="Chertkov O."/>
            <person name="Cleland C."/>
            <person name="Dimitrijevic M."/>
            <person name="Doggett N.A."/>
            <person name="Fawcett J.J."/>
            <person name="Glavina T."/>
            <person name="Goodwin L.A."/>
            <person name="Green L.D."/>
            <person name="Han C.S."/>
            <person name="Hill K.K."/>
            <person name="Hitchcock P."/>
            <person name="Jackson P.J."/>
            <person name="Keim P."/>
            <person name="Kewalramani A.R."/>
            <person name="Longmire J."/>
            <person name="Lucas S."/>
            <person name="Malfatti S."/>
            <person name="Martinez D."/>
            <person name="McMurry K."/>
            <person name="Meincke L.J."/>
            <person name="Misra M."/>
            <person name="Moseman B.L."/>
            <person name="Mundt M."/>
            <person name="Munk A.C."/>
            <person name="Okinaka R.T."/>
            <person name="Parson-Quintana B."/>
            <person name="Reilly L.P."/>
            <person name="Richardson P."/>
            <person name="Robinson D.L."/>
            <person name="Saunders E."/>
            <person name="Tapia R."/>
            <person name="Tesmer J.G."/>
            <person name="Thayer N."/>
            <person name="Thompson L.S."/>
            <person name="Tice H."/>
            <person name="Ticknor L.O."/>
            <person name="Wills P.L."/>
            <person name="Gilna P."/>
            <person name="Brettin T.S."/>
        </authorList>
    </citation>
    <scope>NUCLEOTIDE SEQUENCE [LARGE SCALE GENOMIC DNA]</scope>
    <source>
        <strain>Al Hakam</strain>
    </source>
</reference>
<protein>
    <recommendedName>
        <fullName evidence="1">Large ribosomal subunit protein bL20</fullName>
    </recommendedName>
    <alternativeName>
        <fullName evidence="2">50S ribosomal protein L20</fullName>
    </alternativeName>
</protein>
<feature type="chain" id="PRO_1000048927" description="Large ribosomal subunit protein bL20">
    <location>
        <begin position="1"/>
        <end position="118"/>
    </location>
</feature>
<comment type="function">
    <text evidence="1">Binds directly to 23S ribosomal RNA and is necessary for the in vitro assembly process of the 50S ribosomal subunit. It is not involved in the protein synthesizing functions of that subunit.</text>
</comment>
<comment type="similarity">
    <text evidence="1">Belongs to the bacterial ribosomal protein bL20 family.</text>
</comment>